<feature type="chain" id="PRO_0000414322" description="Small integral membrane protein 12">
    <location>
        <begin position="1"/>
        <end position="92"/>
    </location>
</feature>
<feature type="transmembrane region" description="Helical" evidence="1">
    <location>
        <begin position="15"/>
        <end position="34"/>
    </location>
</feature>
<gene>
    <name type="primary">SMIM12</name>
</gene>
<sequence length="92" mass="10799">MWPVFWTVVRTYAPYVTFPVAFVVGAVGYHLEWFIRGKDPQPVEEEKSISERREDRKLDELLGKDHTQVVSLKDKLEFAPKAVLNRNRPEKN</sequence>
<organism>
    <name type="scientific">Nomascus leucogenys</name>
    <name type="common">Northern white-cheeked gibbon</name>
    <name type="synonym">Hylobates leucogenys</name>
    <dbReference type="NCBI Taxonomy" id="61853"/>
    <lineage>
        <taxon>Eukaryota</taxon>
        <taxon>Metazoa</taxon>
        <taxon>Chordata</taxon>
        <taxon>Craniata</taxon>
        <taxon>Vertebrata</taxon>
        <taxon>Euteleostomi</taxon>
        <taxon>Mammalia</taxon>
        <taxon>Eutheria</taxon>
        <taxon>Euarchontoglires</taxon>
        <taxon>Primates</taxon>
        <taxon>Haplorrhini</taxon>
        <taxon>Catarrhini</taxon>
        <taxon>Hylobatidae</taxon>
        <taxon>Nomascus</taxon>
    </lineage>
</organism>
<keyword id="KW-0472">Membrane</keyword>
<keyword id="KW-1185">Reference proteome</keyword>
<keyword id="KW-0812">Transmembrane</keyword>
<keyword id="KW-1133">Transmembrane helix</keyword>
<protein>
    <recommendedName>
        <fullName>Small integral membrane protein 12</fullName>
    </recommendedName>
</protein>
<name>SIM12_NOMLE</name>
<reference key="1">
    <citation type="submission" date="2012-10" db="EMBL/GenBank/DDBJ databases">
        <authorList>
            <consortium name="Gibbon Genome Sequencing Consortium"/>
        </authorList>
    </citation>
    <scope>NUCLEOTIDE SEQUENCE [LARGE SCALE GENOMIC DNA]</scope>
</reference>
<dbReference type="EMBL" id="ADFV01094900">
    <property type="status" value="NOT_ANNOTATED_CDS"/>
    <property type="molecule type" value="Genomic_DNA"/>
</dbReference>
<dbReference type="RefSeq" id="XP_003276462.1">
    <property type="nucleotide sequence ID" value="XM_003276414.3"/>
</dbReference>
<dbReference type="RefSeq" id="XP_003276463.1">
    <property type="nucleotide sequence ID" value="XM_003276415.3"/>
</dbReference>
<dbReference type="RefSeq" id="XP_003276464.1">
    <property type="nucleotide sequence ID" value="XM_003276416.3"/>
</dbReference>
<dbReference type="RefSeq" id="XP_003276465.1">
    <property type="nucleotide sequence ID" value="XM_003276417.3"/>
</dbReference>
<dbReference type="RefSeq" id="XP_004089794.1">
    <property type="nucleotide sequence ID" value="XM_004089746.3"/>
</dbReference>
<dbReference type="RefSeq" id="XP_012366955.2">
    <property type="nucleotide sequence ID" value="XM_012511501.2"/>
</dbReference>
<dbReference type="RefSeq" id="XP_012366956.1">
    <property type="nucleotide sequence ID" value="XM_012511502.1"/>
</dbReference>
<dbReference type="SMR" id="G1S9B8"/>
<dbReference type="FunCoup" id="G1S9B8">
    <property type="interactions" value="509"/>
</dbReference>
<dbReference type="STRING" id="61853.ENSNLEP00000022108"/>
<dbReference type="Ensembl" id="ENSNLET00000023226.2">
    <property type="protein sequence ID" value="ENSNLEP00000022108.1"/>
    <property type="gene ID" value="ENSNLEG00000018201.2"/>
</dbReference>
<dbReference type="GeneID" id="105740642"/>
<dbReference type="KEGG" id="nle:105740642"/>
<dbReference type="CTD" id="113444"/>
<dbReference type="eggNOG" id="ENOG502S2AD">
    <property type="taxonomic scope" value="Eukaryota"/>
</dbReference>
<dbReference type="GeneTree" id="ENSGT00390000009435"/>
<dbReference type="HOGENOM" id="CLU_160787_0_0_1"/>
<dbReference type="InParanoid" id="G1S9B8"/>
<dbReference type="OMA" id="YHLEWFL"/>
<dbReference type="OrthoDB" id="10296017at2759"/>
<dbReference type="TreeFam" id="TF328614"/>
<dbReference type="Proteomes" id="UP000001073">
    <property type="component" value="Chromosome 12"/>
</dbReference>
<dbReference type="GO" id="GO:0016020">
    <property type="term" value="C:membrane"/>
    <property type="evidence" value="ECO:0007669"/>
    <property type="project" value="UniProtKB-SubCell"/>
</dbReference>
<dbReference type="InterPro" id="IPR031933">
    <property type="entry name" value="UPF0767"/>
</dbReference>
<dbReference type="PANTHER" id="PTHR28599">
    <property type="entry name" value="SMALL INTEGRAL MEMBRANE PROTEIN 12"/>
    <property type="match status" value="1"/>
</dbReference>
<dbReference type="PANTHER" id="PTHR28599:SF2">
    <property type="entry name" value="SMALL INTEGRAL MEMBRANE PROTEIN 12"/>
    <property type="match status" value="1"/>
</dbReference>
<dbReference type="Pfam" id="PF15990">
    <property type="entry name" value="UPF0767"/>
    <property type="match status" value="1"/>
</dbReference>
<comment type="subcellular location">
    <subcellularLocation>
        <location evidence="2">Membrane</location>
        <topology evidence="2">Single-pass membrane protein</topology>
    </subcellularLocation>
</comment>
<comment type="similarity">
    <text evidence="2">Belongs to the SMIM12 family.</text>
</comment>
<proteinExistence type="inferred from homology"/>
<evidence type="ECO:0000255" key="1"/>
<evidence type="ECO:0000305" key="2"/>
<accession>G1S9B8</accession>